<sequence>MIRRRIVGFLRRPLGSEGGPLVSPIVGLVRPLVYPVNRAASPVTAVSPVVRPVGMRFISGPVEREAIRAGISNNTDFLHVQNILLQKDQERQRRELLLKDADNFFERFKVKTKWVLIRGNRPFSKDEIYTLFSWLLLSQIVWIVVGTTTFLSLVIMASNTMFAKEFVGETLGNILNNNKYINGIDFTFKDAMVPEWKKKMIRFHNVTMKSNDKDDTKGVSMNLKLNQVEVSLSVVKWLSGKGLVNDISIFGISGDISINDKKESNVESLINWVTESNPTYELNNFTINDSSTVIHDKANNKHLNMNIYSLVIPRLRFDHLLTDIFSADVLVGSVNDSLFNIHKRQNKLLPAFFSDKGRDNRSKTIDKNENDGRFTNLRLNAININELNLNRTGAFNWIDDGTIEISADIMIPNTDENNEGNGLKTLLGYPGGDPLVNKNTPENKYVVIDVKFKFKDLKTKFPNEEPKLSSGEKILSLNELKPVIAYVNSRSGFIHFLTSLEDSNQSRTNVESVDDNKNWGLSNISIRRKKSYPNTTVISSKPYWNSTSEDNERNLPLPLNQEIIKFHNISVQDDNELVLRCRIVQNVEQLENLSSLKISKMWDTITMEMYMDLLKVVEDWEYRNKNDWMKQWGATFASQLLLVGFGAMV</sequence>
<keyword id="KW-0472">Membrane</keyword>
<keyword id="KW-0496">Mitochondrion</keyword>
<keyword id="KW-0999">Mitochondrion inner membrane</keyword>
<keyword id="KW-1185">Reference proteome</keyword>
<keyword id="KW-0809">Transit peptide</keyword>
<keyword id="KW-0812">Transmembrane</keyword>
<keyword id="KW-1133">Transmembrane helix</keyword>
<proteinExistence type="inferred from homology"/>
<name>MDM32_CANGA</name>
<comment type="function">
    <text evidence="1">Involved in the organization of the mitochondrial membranes and the global structure of the mitochondria. Also required for mitochondrial distribution and mobility as well as for the maintenance of mitochondrial DNA nucleoids structures (By similarity).</text>
</comment>
<comment type="subcellular location">
    <subcellularLocation>
        <location evidence="1">Mitochondrion inner membrane</location>
        <topology evidence="1">Multi-pass membrane protein</topology>
    </subcellularLocation>
</comment>
<comment type="similarity">
    <text evidence="3">Belongs to the MDM31/MDM32 family.</text>
</comment>
<feature type="transit peptide" description="Mitochondrion" evidence="2">
    <location>
        <begin position="1"/>
        <end position="14"/>
    </location>
</feature>
<feature type="chain" id="PRO_0000333678" description="Mitochondrial distribution and morphology protein 32">
    <location>
        <begin position="15"/>
        <end position="649"/>
    </location>
</feature>
<feature type="topological domain" description="Mitochondrial matrix" evidence="2">
    <location>
        <begin position="15"/>
        <end position="134"/>
    </location>
</feature>
<feature type="transmembrane region" description="Helical" evidence="2">
    <location>
        <begin position="135"/>
        <end position="155"/>
    </location>
</feature>
<feature type="topological domain" description="Mitochondrial intermembrane" evidence="2">
    <location>
        <begin position="156"/>
        <end position="628"/>
    </location>
</feature>
<feature type="transmembrane region" description="Helical" evidence="2">
    <location>
        <begin position="629"/>
        <end position="649"/>
    </location>
</feature>
<organism>
    <name type="scientific">Candida glabrata (strain ATCC 2001 / BCRC 20586 / JCM 3761 / NBRC 0622 / NRRL Y-65 / CBS 138)</name>
    <name type="common">Yeast</name>
    <name type="synonym">Nakaseomyces glabratus</name>
    <dbReference type="NCBI Taxonomy" id="284593"/>
    <lineage>
        <taxon>Eukaryota</taxon>
        <taxon>Fungi</taxon>
        <taxon>Dikarya</taxon>
        <taxon>Ascomycota</taxon>
        <taxon>Saccharomycotina</taxon>
        <taxon>Saccharomycetes</taxon>
        <taxon>Saccharomycetales</taxon>
        <taxon>Saccharomycetaceae</taxon>
        <taxon>Nakaseomyces</taxon>
    </lineage>
</organism>
<accession>Q6FMB2</accession>
<reference key="1">
    <citation type="journal article" date="2004" name="Nature">
        <title>Genome evolution in yeasts.</title>
        <authorList>
            <person name="Dujon B."/>
            <person name="Sherman D."/>
            <person name="Fischer G."/>
            <person name="Durrens P."/>
            <person name="Casaregola S."/>
            <person name="Lafontaine I."/>
            <person name="de Montigny J."/>
            <person name="Marck C."/>
            <person name="Neuveglise C."/>
            <person name="Talla E."/>
            <person name="Goffard N."/>
            <person name="Frangeul L."/>
            <person name="Aigle M."/>
            <person name="Anthouard V."/>
            <person name="Babour A."/>
            <person name="Barbe V."/>
            <person name="Barnay S."/>
            <person name="Blanchin S."/>
            <person name="Beckerich J.-M."/>
            <person name="Beyne E."/>
            <person name="Bleykasten C."/>
            <person name="Boisrame A."/>
            <person name="Boyer J."/>
            <person name="Cattolico L."/>
            <person name="Confanioleri F."/>
            <person name="de Daruvar A."/>
            <person name="Despons L."/>
            <person name="Fabre E."/>
            <person name="Fairhead C."/>
            <person name="Ferry-Dumazet H."/>
            <person name="Groppi A."/>
            <person name="Hantraye F."/>
            <person name="Hennequin C."/>
            <person name="Jauniaux N."/>
            <person name="Joyet P."/>
            <person name="Kachouri R."/>
            <person name="Kerrest A."/>
            <person name="Koszul R."/>
            <person name="Lemaire M."/>
            <person name="Lesur I."/>
            <person name="Ma L."/>
            <person name="Muller H."/>
            <person name="Nicaud J.-M."/>
            <person name="Nikolski M."/>
            <person name="Oztas S."/>
            <person name="Ozier-Kalogeropoulos O."/>
            <person name="Pellenz S."/>
            <person name="Potier S."/>
            <person name="Richard G.-F."/>
            <person name="Straub M.-L."/>
            <person name="Suleau A."/>
            <person name="Swennen D."/>
            <person name="Tekaia F."/>
            <person name="Wesolowski-Louvel M."/>
            <person name="Westhof E."/>
            <person name="Wirth B."/>
            <person name="Zeniou-Meyer M."/>
            <person name="Zivanovic Y."/>
            <person name="Bolotin-Fukuhara M."/>
            <person name="Thierry A."/>
            <person name="Bouchier C."/>
            <person name="Caudron B."/>
            <person name="Scarpelli C."/>
            <person name="Gaillardin C."/>
            <person name="Weissenbach J."/>
            <person name="Wincker P."/>
            <person name="Souciet J.-L."/>
        </authorList>
    </citation>
    <scope>NUCLEOTIDE SEQUENCE [LARGE SCALE GENOMIC DNA]</scope>
    <source>
        <strain>ATCC 2001 / BCRC 20586 / JCM 3761 / NBRC 0622 / NRRL Y-65 / CBS 138</strain>
    </source>
</reference>
<gene>
    <name type="primary">MDM32</name>
    <name type="ordered locus">CAGL0K09482g</name>
</gene>
<dbReference type="EMBL" id="CR380957">
    <property type="protein sequence ID" value="CAG61595.1"/>
    <property type="molecule type" value="Genomic_DNA"/>
</dbReference>
<dbReference type="RefSeq" id="XP_448632.1">
    <property type="nucleotide sequence ID" value="XM_448632.1"/>
</dbReference>
<dbReference type="FunCoup" id="Q6FMB2">
    <property type="interactions" value="52"/>
</dbReference>
<dbReference type="EnsemblFungi" id="CAGL0K09482g-T">
    <property type="protein sequence ID" value="CAGL0K09482g-T-p1"/>
    <property type="gene ID" value="CAGL0K09482g"/>
</dbReference>
<dbReference type="KEGG" id="cgr:2890234"/>
<dbReference type="CGD" id="CAL0133869">
    <property type="gene designation" value="CAGL0K09482g"/>
</dbReference>
<dbReference type="VEuPathDB" id="FungiDB:CAGL0K09482g"/>
<dbReference type="eggNOG" id="ENOG502QQU5">
    <property type="taxonomic scope" value="Eukaryota"/>
</dbReference>
<dbReference type="HOGENOM" id="CLU_016236_3_0_1"/>
<dbReference type="InParanoid" id="Q6FMB2"/>
<dbReference type="OMA" id="FAKEMVG"/>
<dbReference type="Proteomes" id="UP000002428">
    <property type="component" value="Chromosome K"/>
</dbReference>
<dbReference type="GO" id="GO:0005743">
    <property type="term" value="C:mitochondrial inner membrane"/>
    <property type="evidence" value="ECO:0007669"/>
    <property type="project" value="UniProtKB-SubCell"/>
</dbReference>
<dbReference type="GO" id="GO:0006873">
    <property type="term" value="P:intracellular monoatomic ion homeostasis"/>
    <property type="evidence" value="ECO:0007669"/>
    <property type="project" value="EnsemblFungi"/>
</dbReference>
<dbReference type="GO" id="GO:0000001">
    <property type="term" value="P:mitochondrion inheritance"/>
    <property type="evidence" value="ECO:0007669"/>
    <property type="project" value="EnsemblFungi"/>
</dbReference>
<dbReference type="GO" id="GO:0007005">
    <property type="term" value="P:mitochondrion organization"/>
    <property type="evidence" value="ECO:0007669"/>
    <property type="project" value="EnsemblFungi"/>
</dbReference>
<dbReference type="InterPro" id="IPR012571">
    <property type="entry name" value="Mdm31/Mdm32"/>
</dbReference>
<dbReference type="PANTHER" id="PTHR31068">
    <property type="entry name" value="MITOCHONDRIAL DISTRIBUTION AND MORPHOLOGY PROTEIN 31"/>
    <property type="match status" value="1"/>
</dbReference>
<dbReference type="PANTHER" id="PTHR31068:SF1">
    <property type="entry name" value="MITOCHONDRIAL DISTRIBUTION AND MORPHOLOGY PROTEIN 32"/>
    <property type="match status" value="1"/>
</dbReference>
<dbReference type="Pfam" id="PF08118">
    <property type="entry name" value="MDM31_MDM32"/>
    <property type="match status" value="2"/>
</dbReference>
<evidence type="ECO:0000250" key="1"/>
<evidence type="ECO:0000255" key="2"/>
<evidence type="ECO:0000305" key="3"/>
<protein>
    <recommendedName>
        <fullName>Mitochondrial distribution and morphology protein 32</fullName>
    </recommendedName>
</protein>